<organism>
    <name type="scientific">Pirital mammarenavirus (isolate Rat/Venezuela/VAV-488/1995)</name>
    <name type="common">PIRV</name>
    <dbReference type="NCBI Taxonomy" id="3052324"/>
    <lineage>
        <taxon>Viruses</taxon>
        <taxon>Riboviria</taxon>
        <taxon>Orthornavirae</taxon>
        <taxon>Negarnaviricota</taxon>
        <taxon>Polyploviricotina</taxon>
        <taxon>Ellioviricetes</taxon>
        <taxon>Bunyavirales</taxon>
        <taxon>Arenaviridae</taxon>
        <taxon>Mammarenavirus</taxon>
    </lineage>
</organism>
<reference key="1">
    <citation type="journal article" date="2003" name="Virology">
        <title>New insights into the evolutionary relationships between arenaviruses provided by comparative analysis of small and large segment sequences.</title>
        <authorList>
            <person name="Charrel R.N."/>
            <person name="Lemasson J.J."/>
            <person name="Garbutt M."/>
            <person name="Khelifa R."/>
            <person name="De Micco P."/>
            <person name="Feldmann H."/>
            <person name="de Lamballerie X."/>
        </authorList>
    </citation>
    <scope>NUCLEOTIDE SEQUENCE [GENOMIC RNA]</scope>
</reference>
<reference key="2">
    <citation type="journal article" date="2004" name="Virus Res.">
        <title>Phylogeny of the Venezuelan arenaviruses.</title>
        <authorList>
            <person name="Cajimat M.N."/>
            <person name="Fulhorst C.F."/>
        </authorList>
    </citation>
    <scope>NUCLEOTIDE SEQUENCE [GENOMIC RNA]</scope>
    <source>
        <strain>VAV-488</strain>
    </source>
</reference>
<reference key="3">
    <citation type="journal article" date="2008" name="Curr. Opin. Microbiol.">
        <title>Phylogeny of the genus Arenavirus.</title>
        <authorList>
            <person name="Charrel R.N."/>
            <person name="de Lamballerie X."/>
            <person name="Emonet S."/>
        </authorList>
    </citation>
    <scope>NUCLEOTIDE SEQUENCE [GENOMIC RNA]</scope>
    <source>
        <strain>VAV-488</strain>
    </source>
</reference>
<gene>
    <name evidence="2" type="primary">Z</name>
</gene>
<feature type="initiator methionine" description="Removed; by host" evidence="2">
    <location>
        <position position="1"/>
    </location>
</feature>
<feature type="chain" id="PRO_0000361039" description="RING finger protein Z" evidence="2">
    <location>
        <begin position="2"/>
        <end position="95"/>
    </location>
</feature>
<feature type="zinc finger region" description="RING-type; atypical" evidence="2">
    <location>
        <begin position="38"/>
        <end position="74"/>
    </location>
</feature>
<feature type="short sequence motif" description="PTAP/PSAP motif" evidence="2">
    <location>
        <begin position="88"/>
        <end position="91"/>
    </location>
</feature>
<feature type="lipid moiety-binding region" description="N-myristoyl glycine; by host" evidence="2">
    <location>
        <position position="2"/>
    </location>
</feature>
<feature type="sequence variant">
    <original>PP</original>
    <variation>SS</variation>
    <location>
        <begin position="91"/>
        <end position="92"/>
    </location>
</feature>
<sequence length="95" mass="10854">MGLRYSKEVRERHGDKDLEGRVPMTLNLPQGLYGRFNCKSCWFANRGLIACSDHYLCLNCLTRLRSQSQFCGICGKPLPTKIRFEESPSAPPYEP</sequence>
<dbReference type="EMBL" id="AY216505">
    <property type="protein sequence ID" value="ABY59836.1"/>
    <property type="molecule type" value="Genomic_RNA"/>
</dbReference>
<dbReference type="EMBL" id="AY494081">
    <property type="protein sequence ID" value="AAS72553.1"/>
    <property type="molecule type" value="Genomic_RNA"/>
</dbReference>
<dbReference type="RefSeq" id="YP_025092.1">
    <property type="nucleotide sequence ID" value="NC_005897.1"/>
</dbReference>
<dbReference type="KEGG" id="vg:2943175"/>
<dbReference type="OrthoDB" id="23344at10239"/>
<dbReference type="Proteomes" id="UP000009266">
    <property type="component" value="Genome"/>
</dbReference>
<dbReference type="GO" id="GO:0044220">
    <property type="term" value="C:host cell perinuclear region of cytoplasm"/>
    <property type="evidence" value="ECO:0007669"/>
    <property type="project" value="UniProtKB-SubCell"/>
</dbReference>
<dbReference type="GO" id="GO:0020002">
    <property type="term" value="C:host cell plasma membrane"/>
    <property type="evidence" value="ECO:0007669"/>
    <property type="project" value="UniProtKB-SubCell"/>
</dbReference>
<dbReference type="GO" id="GO:0016020">
    <property type="term" value="C:membrane"/>
    <property type="evidence" value="ECO:0007669"/>
    <property type="project" value="UniProtKB-UniRule"/>
</dbReference>
<dbReference type="GO" id="GO:0044423">
    <property type="term" value="C:virion component"/>
    <property type="evidence" value="ECO:0007669"/>
    <property type="project" value="UniProtKB-UniRule"/>
</dbReference>
<dbReference type="GO" id="GO:0003723">
    <property type="term" value="F:RNA binding"/>
    <property type="evidence" value="ECO:0007669"/>
    <property type="project" value="UniProtKB-UniRule"/>
</dbReference>
<dbReference type="GO" id="GO:0008270">
    <property type="term" value="F:zinc ion binding"/>
    <property type="evidence" value="ECO:0007669"/>
    <property type="project" value="UniProtKB-UniRule"/>
</dbReference>
<dbReference type="GO" id="GO:0046761">
    <property type="term" value="P:viral budding from plasma membrane"/>
    <property type="evidence" value="ECO:0007669"/>
    <property type="project" value="UniProtKB-UniRule"/>
</dbReference>
<dbReference type="GO" id="GO:0039702">
    <property type="term" value="P:viral budding via host ESCRT complex"/>
    <property type="evidence" value="ECO:0007669"/>
    <property type="project" value="UniProtKB-UniRule"/>
</dbReference>
<dbReference type="Gene3D" id="3.30.160.310">
    <property type="match status" value="1"/>
</dbReference>
<dbReference type="HAMAP" id="MF_04087">
    <property type="entry name" value="ARENA_Z"/>
    <property type="match status" value="1"/>
</dbReference>
<dbReference type="InterPro" id="IPR024183">
    <property type="entry name" value="RING_finger_Z_arenaviridae"/>
</dbReference>
<dbReference type="InterPro" id="IPR038485">
    <property type="entry name" value="Z_RING-type_Znf_sf"/>
</dbReference>
<dbReference type="InterPro" id="IPR003224">
    <property type="entry name" value="Z_RING_Znf"/>
</dbReference>
<dbReference type="Pfam" id="PF03854">
    <property type="entry name" value="zf-P11"/>
    <property type="match status" value="1"/>
</dbReference>
<dbReference type="PIRSF" id="PIRSF004030">
    <property type="entry name" value="Z_ArenaV"/>
    <property type="match status" value="1"/>
</dbReference>
<dbReference type="SUPFAM" id="SSF57850">
    <property type="entry name" value="RING/U-box"/>
    <property type="match status" value="1"/>
</dbReference>
<organismHost>
    <name type="scientific">Sigmodon alstoni</name>
    <dbReference type="NCBI Taxonomy" id="134742"/>
</organismHost>
<protein>
    <recommendedName>
        <fullName evidence="2">RING finger protein Z</fullName>
        <shortName evidence="2">Protein Z</shortName>
    </recommendedName>
    <alternativeName>
        <fullName evidence="2">Zinc-binding protein</fullName>
    </alternativeName>
</protein>
<evidence type="ECO:0000250" key="1">
    <source>
        <dbReference type="UniProtKB" id="P18541"/>
    </source>
</evidence>
<evidence type="ECO:0000255" key="2">
    <source>
        <dbReference type="HAMAP-Rule" id="MF_04087"/>
    </source>
</evidence>
<accession>Q6RSS3</accession>
<accession>B0BLK3</accession>
<keyword id="KW-1032">Host cell membrane</keyword>
<keyword id="KW-1035">Host cytoplasm</keyword>
<keyword id="KW-1043">Host membrane</keyword>
<keyword id="KW-0945">Host-virus interaction</keyword>
<keyword id="KW-0449">Lipoprotein</keyword>
<keyword id="KW-0472">Membrane</keyword>
<keyword id="KW-0479">Metal-binding</keyword>
<keyword id="KW-0519">Myristate</keyword>
<keyword id="KW-1185">Reference proteome</keyword>
<keyword id="KW-1198">Viral budding</keyword>
<keyword id="KW-1187">Viral budding via the host ESCRT complexes</keyword>
<keyword id="KW-1188">Viral release from host cell</keyword>
<keyword id="KW-0946">Virion</keyword>
<keyword id="KW-0862">Zinc</keyword>
<keyword id="KW-0863">Zinc-finger</keyword>
<name>Z_PIRVV</name>
<proteinExistence type="inferred from homology"/>
<comment type="function">
    <text evidence="1 2">Plays a crucial role in virion assembly and budding. Expressed late in the virus life cycle, it acts as an inhibitor of viral transcription and RNA synthesis by interacting with the viral polymerase L. Presumably recruits the NP encapsidated genome to cellular membranes at budding sites via direct interaction with NP. Plays critical roles in the final steps of viral release by interacting with host TSG101, a member of the vacuolar protein-sorting pathway and using other cellular host proteins involved in vesicle formation pathway. The budding of the virus progeny occurs after association of protein Z with the viral glycoprotein complex SSP-GP1-GP2 at the cell periphery, step that requires myristoylation of protein Z. Also selectively represses protein production by associating with host eIF4E (By similarity). In cell-based minigenome assay, has an inhibitory effect on the ribonucleoprotein machinery (vRNP), which is responsible for the replication and transcription of the viral genome (By similarity).</text>
</comment>
<comment type="subunit">
    <text evidence="2">Interacts with protein NP; this interaction probably directs the encapsidated genome to budding sites. Interacts (via RING domain) with polymerase L; this interaction inhibits viral transcription and replication, Z partially blocks the product exit tunnel for the releasing nascent RNA product. Interacts with the glycoprotein complex; this interaction plays a role in virion budding. Interacts with host eIF4E; this interaction results in eIF4E reduced affinity for its substrate, the 5'-m7 G cap structure. Interacts (via late-budding domain) with host TSG101; this interaction is essential for budding and release of viral particles. Interacts with host RPLP0; this interaction may serve to load ribosome-like particles inside the virion. Interacts with host PML; this interaction induces PML bodies redistribution in the cytoplasm upon viral infection.</text>
</comment>
<comment type="subcellular location">
    <subcellularLocation>
        <location evidence="2">Virion</location>
    </subcellularLocation>
    <subcellularLocation>
        <location evidence="2">Host cytoplasm</location>
        <location evidence="2">Host perinuclear region</location>
    </subcellularLocation>
    <subcellularLocation>
        <location evidence="2">Host cell membrane</location>
        <topology evidence="2">Lipid-anchor</topology>
        <orientation evidence="2">Cytoplasmic side</orientation>
    </subcellularLocation>
    <text evidence="2">Mainly perinuclear. During budding, associates at the inner side of the plasma membrane of infected cells.</text>
</comment>
<comment type="domain">
    <text evidence="2">Late-budding domains (L domains) are short sequence motifs essential for viral particle budding. They recruit proteins of the host ESCRT machinery (Endosomal Sorting Complex Required for Transport) or ESCRT-associated proteins.</text>
</comment>
<comment type="PTM">
    <text evidence="1">Myristoylation is required for the role of RING finger protein Z in assembly and budding.</text>
</comment>
<comment type="similarity">
    <text evidence="2">Belongs to the arenaviridae Z protein family.</text>
</comment>